<gene>
    <name evidence="14" type="primary">SLC30A3</name>
    <name evidence="9" type="synonym">ZNT3</name>
</gene>
<name>ZNT3_HUMAN</name>
<organism>
    <name type="scientific">Homo sapiens</name>
    <name type="common">Human</name>
    <dbReference type="NCBI Taxonomy" id="9606"/>
    <lineage>
        <taxon>Eukaryota</taxon>
        <taxon>Metazoa</taxon>
        <taxon>Chordata</taxon>
        <taxon>Craniata</taxon>
        <taxon>Vertebrata</taxon>
        <taxon>Euteleostomi</taxon>
        <taxon>Mammalia</taxon>
        <taxon>Eutheria</taxon>
        <taxon>Euarchontoglires</taxon>
        <taxon>Primates</taxon>
        <taxon>Haplorrhini</taxon>
        <taxon>Catarrhini</taxon>
        <taxon>Hominidae</taxon>
        <taxon>Homo</taxon>
    </lineage>
</organism>
<proteinExistence type="evidence at protein level"/>
<reference key="1">
    <citation type="journal article" date="1996" name="Proc. Natl. Acad. Sci. U.S.A.">
        <title>ZnT-3, a putative transporter of zinc into synaptic vesicles.</title>
        <authorList>
            <person name="Palmiter R.D."/>
            <person name="Cole T.B."/>
            <person name="Quaife C.J."/>
            <person name="Findley S.D."/>
        </authorList>
    </citation>
    <scope>NUCLEOTIDE SEQUENCE [MRNA]</scope>
    <source>
        <tissue>Temporal cortex</tissue>
    </source>
</reference>
<reference key="2">
    <citation type="journal article" date="2004" name="Nat. Genet.">
        <title>Complete sequencing and characterization of 21,243 full-length human cDNAs.</title>
        <authorList>
            <person name="Ota T."/>
            <person name="Suzuki Y."/>
            <person name="Nishikawa T."/>
            <person name="Otsuki T."/>
            <person name="Sugiyama T."/>
            <person name="Irie R."/>
            <person name="Wakamatsu A."/>
            <person name="Hayashi K."/>
            <person name="Sato H."/>
            <person name="Nagai K."/>
            <person name="Kimura K."/>
            <person name="Makita H."/>
            <person name="Sekine M."/>
            <person name="Obayashi M."/>
            <person name="Nishi T."/>
            <person name="Shibahara T."/>
            <person name="Tanaka T."/>
            <person name="Ishii S."/>
            <person name="Yamamoto J."/>
            <person name="Saito K."/>
            <person name="Kawai Y."/>
            <person name="Isono Y."/>
            <person name="Nakamura Y."/>
            <person name="Nagahari K."/>
            <person name="Murakami K."/>
            <person name="Yasuda T."/>
            <person name="Iwayanagi T."/>
            <person name="Wagatsuma M."/>
            <person name="Shiratori A."/>
            <person name="Sudo H."/>
            <person name="Hosoiri T."/>
            <person name="Kaku Y."/>
            <person name="Kodaira H."/>
            <person name="Kondo H."/>
            <person name="Sugawara M."/>
            <person name="Takahashi M."/>
            <person name="Kanda K."/>
            <person name="Yokoi T."/>
            <person name="Furuya T."/>
            <person name="Kikkawa E."/>
            <person name="Omura Y."/>
            <person name="Abe K."/>
            <person name="Kamihara K."/>
            <person name="Katsuta N."/>
            <person name="Sato K."/>
            <person name="Tanikawa M."/>
            <person name="Yamazaki M."/>
            <person name="Ninomiya K."/>
            <person name="Ishibashi T."/>
            <person name="Yamashita H."/>
            <person name="Murakawa K."/>
            <person name="Fujimori K."/>
            <person name="Tanai H."/>
            <person name="Kimata M."/>
            <person name="Watanabe M."/>
            <person name="Hiraoka S."/>
            <person name="Chiba Y."/>
            <person name="Ishida S."/>
            <person name="Ono Y."/>
            <person name="Takiguchi S."/>
            <person name="Watanabe S."/>
            <person name="Yosida M."/>
            <person name="Hotuta T."/>
            <person name="Kusano J."/>
            <person name="Kanehori K."/>
            <person name="Takahashi-Fujii A."/>
            <person name="Hara H."/>
            <person name="Tanase T.-O."/>
            <person name="Nomura Y."/>
            <person name="Togiya S."/>
            <person name="Komai F."/>
            <person name="Hara R."/>
            <person name="Takeuchi K."/>
            <person name="Arita M."/>
            <person name="Imose N."/>
            <person name="Musashino K."/>
            <person name="Yuuki H."/>
            <person name="Oshima A."/>
            <person name="Sasaki N."/>
            <person name="Aotsuka S."/>
            <person name="Yoshikawa Y."/>
            <person name="Matsunawa H."/>
            <person name="Ichihara T."/>
            <person name="Shiohata N."/>
            <person name="Sano S."/>
            <person name="Moriya S."/>
            <person name="Momiyama H."/>
            <person name="Satoh N."/>
            <person name="Takami S."/>
            <person name="Terashima Y."/>
            <person name="Suzuki O."/>
            <person name="Nakagawa S."/>
            <person name="Senoh A."/>
            <person name="Mizoguchi H."/>
            <person name="Goto Y."/>
            <person name="Shimizu F."/>
            <person name="Wakebe H."/>
            <person name="Hishigaki H."/>
            <person name="Watanabe T."/>
            <person name="Sugiyama A."/>
            <person name="Takemoto M."/>
            <person name="Kawakami B."/>
            <person name="Yamazaki M."/>
            <person name="Watanabe K."/>
            <person name="Kumagai A."/>
            <person name="Itakura S."/>
            <person name="Fukuzumi Y."/>
            <person name="Fujimori Y."/>
            <person name="Komiyama M."/>
            <person name="Tashiro H."/>
            <person name="Tanigami A."/>
            <person name="Fujiwara T."/>
            <person name="Ono T."/>
            <person name="Yamada K."/>
            <person name="Fujii Y."/>
            <person name="Ozaki K."/>
            <person name="Hirao M."/>
            <person name="Ohmori Y."/>
            <person name="Kawabata A."/>
            <person name="Hikiji T."/>
            <person name="Kobatake N."/>
            <person name="Inagaki H."/>
            <person name="Ikema Y."/>
            <person name="Okamoto S."/>
            <person name="Okitani R."/>
            <person name="Kawakami T."/>
            <person name="Noguchi S."/>
            <person name="Itoh T."/>
            <person name="Shigeta K."/>
            <person name="Senba T."/>
            <person name="Matsumura K."/>
            <person name="Nakajima Y."/>
            <person name="Mizuno T."/>
            <person name="Morinaga M."/>
            <person name="Sasaki M."/>
            <person name="Togashi T."/>
            <person name="Oyama M."/>
            <person name="Hata H."/>
            <person name="Watanabe M."/>
            <person name="Komatsu T."/>
            <person name="Mizushima-Sugano J."/>
            <person name="Satoh T."/>
            <person name="Shirai Y."/>
            <person name="Takahashi Y."/>
            <person name="Nakagawa K."/>
            <person name="Okumura K."/>
            <person name="Nagase T."/>
            <person name="Nomura N."/>
            <person name="Kikuchi H."/>
            <person name="Masuho Y."/>
            <person name="Yamashita R."/>
            <person name="Nakai K."/>
            <person name="Yada T."/>
            <person name="Nakamura Y."/>
            <person name="Ohara O."/>
            <person name="Isogai T."/>
            <person name="Sugano S."/>
        </authorList>
    </citation>
    <scope>NUCLEOTIDE SEQUENCE [LARGE SCALE MRNA]</scope>
    <source>
        <tissue>Testis</tissue>
    </source>
</reference>
<reference key="3">
    <citation type="journal article" date="2005" name="Nature">
        <title>Generation and annotation of the DNA sequences of human chromosomes 2 and 4.</title>
        <authorList>
            <person name="Hillier L.W."/>
            <person name="Graves T.A."/>
            <person name="Fulton R.S."/>
            <person name="Fulton L.A."/>
            <person name="Pepin K.H."/>
            <person name="Minx P."/>
            <person name="Wagner-McPherson C."/>
            <person name="Layman D."/>
            <person name="Wylie K."/>
            <person name="Sekhon M."/>
            <person name="Becker M.C."/>
            <person name="Fewell G.A."/>
            <person name="Delehaunty K.D."/>
            <person name="Miner T.L."/>
            <person name="Nash W.E."/>
            <person name="Kremitzki C."/>
            <person name="Oddy L."/>
            <person name="Du H."/>
            <person name="Sun H."/>
            <person name="Bradshaw-Cordum H."/>
            <person name="Ali J."/>
            <person name="Carter J."/>
            <person name="Cordes M."/>
            <person name="Harris A."/>
            <person name="Isak A."/>
            <person name="van Brunt A."/>
            <person name="Nguyen C."/>
            <person name="Du F."/>
            <person name="Courtney L."/>
            <person name="Kalicki J."/>
            <person name="Ozersky P."/>
            <person name="Abbott S."/>
            <person name="Armstrong J."/>
            <person name="Belter E.A."/>
            <person name="Caruso L."/>
            <person name="Cedroni M."/>
            <person name="Cotton M."/>
            <person name="Davidson T."/>
            <person name="Desai A."/>
            <person name="Elliott G."/>
            <person name="Erb T."/>
            <person name="Fronick C."/>
            <person name="Gaige T."/>
            <person name="Haakenson W."/>
            <person name="Haglund K."/>
            <person name="Holmes A."/>
            <person name="Harkins R."/>
            <person name="Kim K."/>
            <person name="Kruchowski S.S."/>
            <person name="Strong C.M."/>
            <person name="Grewal N."/>
            <person name="Goyea E."/>
            <person name="Hou S."/>
            <person name="Levy A."/>
            <person name="Martinka S."/>
            <person name="Mead K."/>
            <person name="McLellan M.D."/>
            <person name="Meyer R."/>
            <person name="Randall-Maher J."/>
            <person name="Tomlinson C."/>
            <person name="Dauphin-Kohlberg S."/>
            <person name="Kozlowicz-Reilly A."/>
            <person name="Shah N."/>
            <person name="Swearengen-Shahid S."/>
            <person name="Snider J."/>
            <person name="Strong J.T."/>
            <person name="Thompson J."/>
            <person name="Yoakum M."/>
            <person name="Leonard S."/>
            <person name="Pearman C."/>
            <person name="Trani L."/>
            <person name="Radionenko M."/>
            <person name="Waligorski J.E."/>
            <person name="Wang C."/>
            <person name="Rock S.M."/>
            <person name="Tin-Wollam A.-M."/>
            <person name="Maupin R."/>
            <person name="Latreille P."/>
            <person name="Wendl M.C."/>
            <person name="Yang S.-P."/>
            <person name="Pohl C."/>
            <person name="Wallis J.W."/>
            <person name="Spieth J."/>
            <person name="Bieri T.A."/>
            <person name="Berkowicz N."/>
            <person name="Nelson J.O."/>
            <person name="Osborne J."/>
            <person name="Ding L."/>
            <person name="Meyer R."/>
            <person name="Sabo A."/>
            <person name="Shotland Y."/>
            <person name="Sinha P."/>
            <person name="Wohldmann P.E."/>
            <person name="Cook L.L."/>
            <person name="Hickenbotham M.T."/>
            <person name="Eldred J."/>
            <person name="Williams D."/>
            <person name="Jones T.A."/>
            <person name="She X."/>
            <person name="Ciccarelli F.D."/>
            <person name="Izaurralde E."/>
            <person name="Taylor J."/>
            <person name="Schmutz J."/>
            <person name="Myers R.M."/>
            <person name="Cox D.R."/>
            <person name="Huang X."/>
            <person name="McPherson J.D."/>
            <person name="Mardis E.R."/>
            <person name="Clifton S.W."/>
            <person name="Warren W.C."/>
            <person name="Chinwalla A.T."/>
            <person name="Eddy S.R."/>
            <person name="Marra M.A."/>
            <person name="Ovcharenko I."/>
            <person name="Furey T.S."/>
            <person name="Miller W."/>
            <person name="Eichler E.E."/>
            <person name="Bork P."/>
            <person name="Suyama M."/>
            <person name="Torrents D."/>
            <person name="Waterston R.H."/>
            <person name="Wilson R.K."/>
        </authorList>
    </citation>
    <scope>NUCLEOTIDE SEQUENCE [LARGE SCALE GENOMIC DNA]</scope>
</reference>
<reference key="4">
    <citation type="journal article" date="2004" name="Genome Res.">
        <title>The status, quality, and expansion of the NIH full-length cDNA project: the Mammalian Gene Collection (MGC).</title>
        <authorList>
            <consortium name="The MGC Project Team"/>
        </authorList>
    </citation>
    <scope>NUCLEOTIDE SEQUENCE [LARGE SCALE MRNA]</scope>
    <source>
        <tissue>Testis</tissue>
    </source>
</reference>
<reference key="5">
    <citation type="journal article" date="2007" name="Exp. Cell Res.">
        <title>Zinc transporter 2 (SLC30A2) can suppress the vesicular zinc defect of adaptor protein 3-depleted fibroblasts by promoting zinc accumulation in lysosomes.</title>
        <authorList>
            <person name="Falcon-Perez J.M."/>
            <person name="Dell'Angelica E.C."/>
        </authorList>
    </citation>
    <scope>FUNCTION</scope>
    <scope>TRANSPORTER ACTIVITY</scope>
    <scope>SUBCELLULAR LOCATION</scope>
</reference>
<reference key="6">
    <citation type="journal article" date="2009" name="PLoS ONE">
        <title>SLC30A3 (ZnT3) oligomerization by dityrosine bonds regulates its subcellular localization and metal transport capacity.</title>
        <authorList>
            <person name="Salazar G."/>
            <person name="Falcon-Perez J.M."/>
            <person name="Harrison R."/>
            <person name="Faundez V."/>
        </authorList>
    </citation>
    <scope>FUNCTION</scope>
    <scope>TRANSPORTER ACTIVITY</scope>
    <scope>SUBUNIT</scope>
    <scope>DITYROSINE BOND</scope>
    <scope>MUTAGENESIS OF TYR-330; TYR-357 AND TYR-372</scope>
</reference>
<reference key="7">
    <citation type="journal article" date="2022" name="Biochem. Biophys. Rep.">
        <title>Transmembrane 163 (TMEM163) protein interacts with specific mammalian SLC30 zinc efflux transporter family members.</title>
        <authorList>
            <person name="Escobar A."/>
            <person name="Styrpejko D.J."/>
            <person name="Ali S."/>
            <person name="Cuajungco M.P."/>
        </authorList>
    </citation>
    <scope>INTERACTION WITH TMEM163</scope>
</reference>
<reference key="8">
    <citation type="journal article" date="2015" name="Sci. Rep.">
        <title>Loss of synaptic Zn2+ transporter function increases risk of febrile seizures.</title>
        <authorList>
            <person name="Hildebrand M.S."/>
            <person name="Phillips A.M."/>
            <person name="Mullen S.A."/>
            <person name="Adlard P.A."/>
            <person name="Hardies K."/>
            <person name="Damiano J.A."/>
            <person name="Wimmer V."/>
            <person name="Bellows S.T."/>
            <person name="McMahon J.M."/>
            <person name="Burgess R."/>
            <person name="Hendrickx R."/>
            <person name="Weckhuysen S."/>
            <person name="Suls A."/>
            <person name="De Jonghe P."/>
            <person name="Scheffer I.E."/>
            <person name="Petrou S."/>
            <person name="Berkovic S.F."/>
            <person name="Reid C.A."/>
        </authorList>
    </citation>
    <scope>VARIANT CYS-298</scope>
    <scope>CHARACTERIZATION OF VARIANT CYS-298</scope>
    <scope>FUNCTION</scope>
    <scope>TRANSPORTER ACTIVITY</scope>
    <scope>SUBCELLULAR LOCATION</scope>
</reference>
<sequence length="388" mass="41945">MEPSPAAGGLETTRLVSPRDRGGAGGSLRLKSLFTEPSEPLPEESKPVEMPFHHCHRDPLPPPGLTPERLHARRQLYAACAVCFVFMAGEVVGGYLAHSLAIMTDAAHLLADVGSMMGSLFSLWLSTRPATRTMTFGWHRSETLGALASVVSLWMVTGILLYLAFVRLLHSDYHIEGGAMLLTASIAVCANLLMAFVLHQAGPPHSHGSRGAEYAPLEEGPEEPLPLGNTSVRAAFVHVLGDLLQSFGVLAASILIYFKPQYKAADPISTFLFSICALGSTAPTLRDVLRILMEGTPRNVGFEPVRDTLLSVPGVRATHELHLWALTLTYHVASAHLAIDSTADPEAVLAEASSRLYSRFGFSSCTLQVEQYQPEMAQCLRCQEPPQA</sequence>
<feature type="chain" id="PRO_0000206096" description="Probable proton-coupled zinc antiporter SLC30A3">
    <location>
        <begin position="1"/>
        <end position="388"/>
    </location>
</feature>
<feature type="topological domain" description="Cytoplasmic" evidence="10">
    <location>
        <begin position="1"/>
        <end position="75"/>
    </location>
</feature>
<feature type="transmembrane region" description="Helical" evidence="3">
    <location>
        <begin position="76"/>
        <end position="96"/>
    </location>
</feature>
<feature type="topological domain" description="Lumenal" evidence="10">
    <location>
        <begin position="97"/>
        <end position="105"/>
    </location>
</feature>
<feature type="transmembrane region" description="Helical" evidence="3">
    <location>
        <begin position="106"/>
        <end position="126"/>
    </location>
</feature>
<feature type="topological domain" description="Cytoplasmic" evidence="10">
    <location>
        <begin position="127"/>
        <end position="145"/>
    </location>
</feature>
<feature type="transmembrane region" description="Helical" evidence="3">
    <location>
        <begin position="146"/>
        <end position="166"/>
    </location>
</feature>
<feature type="topological domain" description="Lumenal" evidence="10">
    <location>
        <begin position="167"/>
        <end position="177"/>
    </location>
</feature>
<feature type="transmembrane region" description="Helical" evidence="3">
    <location>
        <begin position="178"/>
        <end position="198"/>
    </location>
</feature>
<feature type="topological domain" description="Cytoplasmic" evidence="10">
    <location>
        <begin position="199"/>
        <end position="235"/>
    </location>
</feature>
<feature type="transmembrane region" description="Helical" evidence="3">
    <location>
        <begin position="236"/>
        <end position="256"/>
    </location>
</feature>
<feature type="topological domain" description="Lumenal" evidence="10">
    <location>
        <begin position="257"/>
        <end position="264"/>
    </location>
</feature>
<feature type="transmembrane region" description="Helical" evidence="3">
    <location>
        <begin position="265"/>
        <end position="285"/>
    </location>
</feature>
<feature type="topological domain" description="Cytoplasmic" evidence="10">
    <location>
        <begin position="286"/>
        <end position="388"/>
    </location>
</feature>
<feature type="region of interest" description="Disordered" evidence="4">
    <location>
        <begin position="1"/>
        <end position="46"/>
    </location>
</feature>
<feature type="binding site" evidence="2">
    <location>
        <position position="108"/>
    </location>
    <ligand>
        <name>Zn(2+)</name>
        <dbReference type="ChEBI" id="CHEBI:29105"/>
        <note>transported zinc</note>
    </ligand>
</feature>
<feature type="binding site" evidence="2">
    <location>
        <position position="112"/>
    </location>
    <ligand>
        <name>Zn(2+)</name>
        <dbReference type="ChEBI" id="CHEBI:29105"/>
        <note>transported zinc</note>
    </ligand>
</feature>
<feature type="binding site" evidence="2">
    <location>
        <position position="238"/>
    </location>
    <ligand>
        <name>Zn(2+)</name>
        <dbReference type="ChEBI" id="CHEBI:29105"/>
        <note>transported zinc</note>
    </ligand>
</feature>
<feature type="binding site" evidence="2">
    <location>
        <position position="242"/>
    </location>
    <ligand>
        <name>Zn(2+)</name>
        <dbReference type="ChEBI" id="CHEBI:29105"/>
        <note>transported zinc</note>
    </ligand>
</feature>
<feature type="cross-link" description="Dityrosine (Tyr-Tyr) (interchain with Y-372)" evidence="12">
    <location>
        <position position="357"/>
    </location>
</feature>
<feature type="cross-link" description="Dityrosine (Tyr-Tyr) (interchain with Y-357)" evidence="12">
    <location>
        <position position="372"/>
    </location>
</feature>
<feature type="sequence variant" id="VAR_077209" description="May be associated with increased risk for febrile seizures; decreased zinc transport; decreased localization to synaptic vesicles; dbSNP:rs146572471." evidence="7">
    <original>R</original>
    <variation>C</variation>
    <location>
        <position position="298"/>
    </location>
</feature>
<feature type="mutagenesis site" description="No effect on homodimerization." evidence="6">
    <original>Y</original>
    <variation>F</variation>
    <location>
        <position position="330"/>
    </location>
</feature>
<feature type="mutagenesis site" description="Increased homodimerization. Increased localization to intracellular vesicles." evidence="6">
    <original>Y</original>
    <variation>F</variation>
    <location>
        <position position="357"/>
    </location>
</feature>
<feature type="mutagenesis site" description="Decreased homodimerization. Decreased localization to intracellular vesicles. Loss of zinc transporter activity." evidence="6">
    <original>Y</original>
    <variation>F</variation>
    <location>
        <position position="372"/>
    </location>
</feature>
<feature type="sequence conflict" description="In Ref. 1; AAB39732." evidence="10" ref="1">
    <original>E</original>
    <variation>Q</variation>
    <location>
        <position position="223"/>
    </location>
</feature>
<protein>
    <recommendedName>
        <fullName evidence="11">Probable proton-coupled zinc antiporter SLC30A3</fullName>
    </recommendedName>
    <alternativeName>
        <fullName evidence="14">Solute carrier family 30 member 3</fullName>
    </alternativeName>
    <alternativeName>
        <fullName evidence="12">Zinc transporter 3</fullName>
        <shortName evidence="9">ZnT-3</shortName>
    </alternativeName>
</protein>
<comment type="function">
    <text evidence="5 6 7">Probable proton-coupled zinc ion antiporter mediating the import of zinc from cytoplasm into synaptic vesicles and participating to cellular zinc ion homeostasis in the brain.</text>
</comment>
<comment type="catalytic activity">
    <reaction evidence="11 12 13">
        <text>Zn(2+)(in) + 2 H(+)(out) = Zn(2+)(out) + 2 H(+)(in)</text>
        <dbReference type="Rhea" id="RHEA:72627"/>
        <dbReference type="ChEBI" id="CHEBI:15378"/>
        <dbReference type="ChEBI" id="CHEBI:29105"/>
    </reaction>
</comment>
<comment type="subunit">
    <text evidence="6 8">Homodimer; dityrosine-linked. Homodimerization seems specific of the human protein and enhances the zinc transport efficiency. Interacts with TMEM163 (PubMed:36204728).</text>
</comment>
<comment type="interaction">
    <interactant intactId="EBI-10294651">
        <id>Q99726</id>
    </interactant>
    <interactant intactId="EBI-525714">
        <id>P25942</id>
        <label>CD40</label>
    </interactant>
    <organismsDiffer>false</organismsDiffer>
    <experiments>3</experiments>
</comment>
<comment type="interaction">
    <interactant intactId="EBI-10294651">
        <id>Q99726</id>
    </interactant>
    <interactant intactId="EBI-2130213">
        <id>Q99675</id>
        <label>CGRRF1</label>
    </interactant>
    <organismsDiffer>false</organismsDiffer>
    <experiments>3</experiments>
</comment>
<comment type="interaction">
    <interactant intactId="EBI-10294651">
        <id>Q99726</id>
    </interactant>
    <interactant intactId="EBI-18535450">
        <id>Q9GZR5</id>
        <label>ELOVL4</label>
    </interactant>
    <organismsDiffer>false</organismsDiffer>
    <experiments>3</experiments>
</comment>
<comment type="interaction">
    <interactant intactId="EBI-10294651">
        <id>Q99726</id>
    </interactant>
    <interactant intactId="EBI-17443171">
        <id>Q96P31-6</id>
        <label>FCRL3</label>
    </interactant>
    <organismsDiffer>false</organismsDiffer>
    <experiments>3</experiments>
</comment>
<comment type="interaction">
    <interactant intactId="EBI-10294651">
        <id>Q99726</id>
    </interactant>
    <interactant intactId="EBI-17458373">
        <id>P48165</id>
        <label>GJA8</label>
    </interactant>
    <organismsDiffer>false</organismsDiffer>
    <experiments>3</experiments>
</comment>
<comment type="interaction">
    <interactant intactId="EBI-10294651">
        <id>Q99726</id>
    </interactant>
    <interactant intactId="EBI-712073">
        <id>Q8NBJ4</id>
        <label>GOLM1</label>
    </interactant>
    <organismsDiffer>false</organismsDiffer>
    <experiments>3</experiments>
</comment>
<comment type="interaction">
    <interactant intactId="EBI-10294651">
        <id>Q99726</id>
    </interactant>
    <interactant intactId="EBI-13345167">
        <id>Q8TDT2</id>
        <label>GPR152</label>
    </interactant>
    <organismsDiffer>false</organismsDiffer>
    <experiments>3</experiments>
</comment>
<comment type="interaction">
    <interactant intactId="EBI-10294651">
        <id>Q99726</id>
    </interactant>
    <interactant intactId="EBI-18076404">
        <id>O15529</id>
        <label>GPR42</label>
    </interactant>
    <organismsDiffer>false</organismsDiffer>
    <experiments>3</experiments>
</comment>
<comment type="interaction">
    <interactant intactId="EBI-10294651">
        <id>Q99726</id>
    </interactant>
    <interactant intactId="EBI-11721746">
        <id>Q8TED1</id>
        <label>GPX8</label>
    </interactant>
    <organismsDiffer>false</organismsDiffer>
    <experiments>3</experiments>
</comment>
<comment type="interaction">
    <interactant intactId="EBI-10294651">
        <id>Q99726</id>
    </interactant>
    <interactant intactId="EBI-18053395">
        <id>Q7Z5P4</id>
        <label>HSD17B13</label>
    </interactant>
    <organismsDiffer>false</organismsDiffer>
    <experiments>3</experiments>
</comment>
<comment type="interaction">
    <interactant intactId="EBI-10294651">
        <id>Q99726</id>
    </interactant>
    <interactant intactId="EBI-10178964">
        <id>Q58DX5</id>
        <label>NAALADL2</label>
    </interactant>
    <organismsDiffer>false</organismsDiffer>
    <experiments>3</experiments>
</comment>
<comment type="interaction">
    <interactant intactId="EBI-10294651">
        <id>Q99726</id>
    </interactant>
    <interactant intactId="EBI-2683029">
        <id>Q9NX40</id>
        <label>OCIAD1</label>
    </interactant>
    <organismsDiffer>false</organismsDiffer>
    <experiments>4</experiments>
</comment>
<comment type="interaction">
    <interactant intactId="EBI-10294651">
        <id>Q99726</id>
    </interactant>
    <interactant intactId="EBI-10192441">
        <id>Q86VR2</id>
        <label>RETREG3</label>
    </interactant>
    <organismsDiffer>false</organismsDiffer>
    <experiments>3</experiments>
</comment>
<comment type="interaction">
    <interactant intactId="EBI-10294651">
        <id>Q99726</id>
    </interactant>
    <interactant intactId="EBI-2466594">
        <id>Q6ZMZ0</id>
        <label>RNF19B</label>
    </interactant>
    <organismsDiffer>false</organismsDiffer>
    <experiments>3</experiments>
</comment>
<comment type="interaction">
    <interactant intactId="EBI-10294651">
        <id>Q99726</id>
    </interactant>
    <interactant intactId="EBI-11525735">
        <id>O95197-3</id>
        <label>RTN3</label>
    </interactant>
    <organismsDiffer>false</organismsDiffer>
    <experiments>3</experiments>
</comment>
<comment type="interaction">
    <interactant intactId="EBI-10294651">
        <id>Q99726</id>
    </interactant>
    <interactant intactId="EBI-17247926">
        <id>Q9NY72</id>
        <label>SCN3B</label>
    </interactant>
    <organismsDiffer>false</organismsDiffer>
    <experiments>3</experiments>
</comment>
<comment type="interaction">
    <interactant intactId="EBI-10294651">
        <id>Q99726</id>
    </interactant>
    <interactant intactId="EBI-1046170">
        <id>O95470</id>
        <label>SGPL1</label>
    </interactant>
    <organismsDiffer>false</organismsDiffer>
    <experiments>3</experiments>
</comment>
<comment type="interaction">
    <interactant intactId="EBI-10294651">
        <id>Q99726</id>
    </interactant>
    <interactant intactId="EBI-18159983">
        <id>Q3KNW5</id>
        <label>SLC10A6</label>
    </interactant>
    <organismsDiffer>false</organismsDiffer>
    <experiments>3</experiments>
</comment>
<comment type="interaction">
    <interactant intactId="EBI-10294651">
        <id>Q99726</id>
    </interactant>
    <interactant intactId="EBI-13917996">
        <id>Q6XR72</id>
        <label>SLC30A10</label>
    </interactant>
    <organismsDiffer>false</organismsDiffer>
    <experiments>3</experiments>
</comment>
<comment type="interaction">
    <interactant intactId="EBI-10294651">
        <id>Q99726</id>
    </interactant>
    <interactant intactId="EBI-8644112">
        <id>Q9BRI3</id>
        <label>SLC30A2</label>
    </interactant>
    <organismsDiffer>false</organismsDiffer>
    <experiments>7</experiments>
</comment>
<comment type="interaction">
    <interactant intactId="EBI-10294651">
        <id>Q99726</id>
    </interactant>
    <interactant intactId="EBI-13918058">
        <id>O14863</id>
        <label>SLC30A4</label>
    </interactant>
    <organismsDiffer>false</organismsDiffer>
    <experiments>8</experiments>
</comment>
<comment type="interaction">
    <interactant intactId="EBI-10294651">
        <id>Q99726</id>
    </interactant>
    <interactant intactId="EBI-10262251">
        <id>Q8IWU4</id>
        <label>SLC30A8</label>
    </interactant>
    <organismsDiffer>false</organismsDiffer>
    <experiments>3</experiments>
</comment>
<comment type="interaction">
    <interactant intactId="EBI-10294651">
        <id>Q99726</id>
    </interactant>
    <interactant intactId="EBI-12811757">
        <id>O95436-2</id>
        <label>SLC34A2</label>
    </interactant>
    <organismsDiffer>false</organismsDiffer>
    <experiments>5</experiments>
</comment>
<comment type="interaction">
    <interactant intactId="EBI-10294651">
        <id>Q99726</id>
    </interactant>
    <interactant intactId="EBI-17295964">
        <id>Q9NQQ7-3</id>
        <label>SLC35C2</label>
    </interactant>
    <organismsDiffer>false</organismsDiffer>
    <experiments>3</experiments>
</comment>
<comment type="interaction">
    <interactant intactId="EBI-10294651">
        <id>Q99726</id>
    </interactant>
    <interactant intactId="EBI-8638294">
        <id>Q9NUH8</id>
        <label>TMEM14B</label>
    </interactant>
    <organismsDiffer>false</organismsDiffer>
    <experiments>3</experiments>
</comment>
<comment type="interaction">
    <interactant intactId="EBI-10294651">
        <id>Q99726</id>
    </interactant>
    <interactant intactId="EBI-25600012">
        <id>Q8TC26</id>
        <label>TMEM163</label>
    </interactant>
    <organismsDiffer>false</organismsDiffer>
    <experiments>3</experiments>
</comment>
<comment type="interaction">
    <interactant intactId="EBI-10294651">
        <id>Q99726</id>
    </interactant>
    <interactant intactId="EBI-10315004">
        <id>Q9NWH2</id>
        <label>TMEM242</label>
    </interactant>
    <organismsDiffer>false</organismsDiffer>
    <experiments>3</experiments>
</comment>
<comment type="subcellular location">
    <subcellularLocation>
        <location evidence="13">Cytoplasmic vesicle</location>
        <location evidence="13">Secretory vesicle</location>
        <location evidence="13">Synaptic vesicle membrane</location>
        <topology evidence="3">Multi-pass membrane protein</topology>
    </subcellularLocation>
    <subcellularLocation>
        <location evidence="1">Synapse</location>
        <location evidence="1">Synaptosome</location>
    </subcellularLocation>
    <subcellularLocation>
        <location evidence="5">Late endosome membrane</location>
        <topology evidence="3">Multi-pass membrane protein</topology>
    </subcellularLocation>
    <subcellularLocation>
        <location evidence="5">Lysosome membrane</location>
        <topology evidence="3">Multi-pass membrane protein</topology>
    </subcellularLocation>
</comment>
<comment type="PTM">
    <text evidence="6">Homodimerization through dityrosine bonds is stimulated by oxidative stress.</text>
</comment>
<comment type="similarity">
    <text evidence="10">Belongs to the cation diffusion facilitator (CDF) transporter (TC 2.A.4) family. SLC30A subfamily.</text>
</comment>
<accession>Q99726</accession>
<accession>Q8TC03</accession>
<keyword id="KW-0002">3D-structure</keyword>
<keyword id="KW-0050">Antiport</keyword>
<keyword id="KW-0968">Cytoplasmic vesicle</keyword>
<keyword id="KW-0967">Endosome</keyword>
<keyword id="KW-0406">Ion transport</keyword>
<keyword id="KW-0458">Lysosome</keyword>
<keyword id="KW-0472">Membrane</keyword>
<keyword id="KW-0479">Metal-binding</keyword>
<keyword id="KW-1267">Proteomics identification</keyword>
<keyword id="KW-1185">Reference proteome</keyword>
<keyword id="KW-0770">Synapse</keyword>
<keyword id="KW-0771">Synaptosome</keyword>
<keyword id="KW-0812">Transmembrane</keyword>
<keyword id="KW-1133">Transmembrane helix</keyword>
<keyword id="KW-0813">Transport</keyword>
<keyword id="KW-0862">Zinc</keyword>
<keyword id="KW-0864">Zinc transport</keyword>
<dbReference type="EMBL" id="U76010">
    <property type="protein sequence ID" value="AAB39732.1"/>
    <property type="molecule type" value="mRNA"/>
</dbReference>
<dbReference type="EMBL" id="AK313600">
    <property type="protein sequence ID" value="BAG36366.1"/>
    <property type="molecule type" value="mRNA"/>
</dbReference>
<dbReference type="EMBL" id="AC013413">
    <property type="protein sequence ID" value="AAY24294.1"/>
    <property type="molecule type" value="Genomic_DNA"/>
</dbReference>
<dbReference type="EMBL" id="BC028358">
    <property type="protein sequence ID" value="AAH28358.1"/>
    <property type="molecule type" value="mRNA"/>
</dbReference>
<dbReference type="CCDS" id="CCDS1743.1"/>
<dbReference type="RefSeq" id="NP_001305878.1">
    <property type="nucleotide sequence ID" value="NM_001318949.1"/>
</dbReference>
<dbReference type="RefSeq" id="NP_001305879.1">
    <property type="nucleotide sequence ID" value="NM_001318950.1"/>
</dbReference>
<dbReference type="RefSeq" id="NP_001305880.1">
    <property type="nucleotide sequence ID" value="NM_001318951.1"/>
</dbReference>
<dbReference type="RefSeq" id="NP_003450.2">
    <property type="nucleotide sequence ID" value="NM_003459.4"/>
</dbReference>
<dbReference type="PDB" id="8XN1">
    <property type="method" value="EM"/>
    <property type="resolution" value="3.14 A"/>
    <property type="chains" value="A/B=50-388"/>
</dbReference>
<dbReference type="PDBsum" id="8XN1"/>
<dbReference type="EMDB" id="EMD-38494"/>
<dbReference type="SMR" id="Q99726"/>
<dbReference type="BioGRID" id="113562">
    <property type="interactions" value="43"/>
</dbReference>
<dbReference type="ComplexPortal" id="CPX-8426">
    <property type="entry name" value="ZNT3 proton-coupled zinc antiporter homodimer"/>
</dbReference>
<dbReference type="ComplexPortal" id="CPX-8427">
    <property type="entry name" value="ZNT1-ZNT3 proton-coupled zinc antiporter complex"/>
</dbReference>
<dbReference type="ComplexPortal" id="CPX-8428">
    <property type="entry name" value="ZNT2-ZNT3 proton-coupled zinc antiporter complex"/>
</dbReference>
<dbReference type="ComplexPortal" id="CPX-8443">
    <property type="entry name" value="ZNT3-ZNT4 proton-coupled zinc antiporter complex"/>
</dbReference>
<dbReference type="ComplexPortal" id="CPX-8464">
    <property type="entry name" value="ZNT3-ZNT10 proton-coupled zinc antiporter complex"/>
</dbReference>
<dbReference type="FunCoup" id="Q99726">
    <property type="interactions" value="98"/>
</dbReference>
<dbReference type="IntAct" id="Q99726">
    <property type="interactions" value="33"/>
</dbReference>
<dbReference type="STRING" id="9606.ENSP00000233535"/>
<dbReference type="DrugBank" id="DB14533">
    <property type="generic name" value="Zinc chloride"/>
</dbReference>
<dbReference type="DrugBank" id="DB14548">
    <property type="generic name" value="Zinc sulfate, unspecified form"/>
</dbReference>
<dbReference type="TCDB" id="2.A.4.3.2">
    <property type="family name" value="the cation diffusion facilitator (cdf) family"/>
</dbReference>
<dbReference type="GlyGen" id="Q99726">
    <property type="glycosylation" value="1 site, 1 O-linked glycan (1 site)"/>
</dbReference>
<dbReference type="iPTMnet" id="Q99726"/>
<dbReference type="PhosphoSitePlus" id="Q99726"/>
<dbReference type="SwissPalm" id="Q99726"/>
<dbReference type="BioMuta" id="SLC30A3"/>
<dbReference type="DMDM" id="215273923"/>
<dbReference type="MassIVE" id="Q99726"/>
<dbReference type="PaxDb" id="9606-ENSP00000233535"/>
<dbReference type="PeptideAtlas" id="Q99726"/>
<dbReference type="ProteomicsDB" id="78440"/>
<dbReference type="Antibodypedia" id="47345">
    <property type="antibodies" value="153 antibodies from 24 providers"/>
</dbReference>
<dbReference type="DNASU" id="7781"/>
<dbReference type="Ensembl" id="ENST00000233535.9">
    <property type="protein sequence ID" value="ENSP00000233535.4"/>
    <property type="gene ID" value="ENSG00000115194.11"/>
</dbReference>
<dbReference type="GeneID" id="7781"/>
<dbReference type="KEGG" id="hsa:7781"/>
<dbReference type="MANE-Select" id="ENST00000233535.9">
    <property type="protein sequence ID" value="ENSP00000233535.4"/>
    <property type="RefSeq nucleotide sequence ID" value="NM_003459.5"/>
    <property type="RefSeq protein sequence ID" value="NP_003450.2"/>
</dbReference>
<dbReference type="UCSC" id="uc002rjk.4">
    <property type="organism name" value="human"/>
</dbReference>
<dbReference type="AGR" id="HGNC:11014"/>
<dbReference type="CTD" id="7781"/>
<dbReference type="DisGeNET" id="7781"/>
<dbReference type="GeneCards" id="SLC30A3"/>
<dbReference type="HGNC" id="HGNC:11014">
    <property type="gene designation" value="SLC30A3"/>
</dbReference>
<dbReference type="HPA" id="ENSG00000115194">
    <property type="expression patterns" value="Group enriched (brain, epididymis, testis)"/>
</dbReference>
<dbReference type="MIM" id="602878">
    <property type="type" value="gene"/>
</dbReference>
<dbReference type="neXtProt" id="NX_Q99726"/>
<dbReference type="OpenTargets" id="ENSG00000115194"/>
<dbReference type="PharmGKB" id="PA35884"/>
<dbReference type="VEuPathDB" id="HostDB:ENSG00000115194"/>
<dbReference type="eggNOG" id="KOG1482">
    <property type="taxonomic scope" value="Eukaryota"/>
</dbReference>
<dbReference type="GeneTree" id="ENSGT00940000161480"/>
<dbReference type="InParanoid" id="Q99726"/>
<dbReference type="OMA" id="RTWGWAR"/>
<dbReference type="OrthoDB" id="9944568at2759"/>
<dbReference type="PAN-GO" id="Q99726">
    <property type="GO annotations" value="5 GO annotations based on evolutionary models"/>
</dbReference>
<dbReference type="PhylomeDB" id="Q99726"/>
<dbReference type="TreeFam" id="TF313382"/>
<dbReference type="PathwayCommons" id="Q99726"/>
<dbReference type="Reactome" id="R-HSA-435368">
    <property type="pathway name" value="Zinc efflux and compartmentalization by the SLC30 family"/>
</dbReference>
<dbReference type="SignaLink" id="Q99726"/>
<dbReference type="BioGRID-ORCS" id="7781">
    <property type="hits" value="8 hits in 1145 CRISPR screens"/>
</dbReference>
<dbReference type="GeneWiki" id="SLC30A3"/>
<dbReference type="GenomeRNAi" id="7781"/>
<dbReference type="Pharos" id="Q99726">
    <property type="development level" value="Tbio"/>
</dbReference>
<dbReference type="PRO" id="PR:Q99726"/>
<dbReference type="Proteomes" id="UP000005640">
    <property type="component" value="Chromosome 2"/>
</dbReference>
<dbReference type="RNAct" id="Q99726">
    <property type="molecule type" value="protein"/>
</dbReference>
<dbReference type="Bgee" id="ENSG00000115194">
    <property type="expression patterns" value="Expressed in corpus epididymis and 142 other cell types or tissues"/>
</dbReference>
<dbReference type="ExpressionAtlas" id="Q99726">
    <property type="expression patterns" value="baseline and differential"/>
</dbReference>
<dbReference type="GO" id="GO:0005737">
    <property type="term" value="C:cytoplasm"/>
    <property type="evidence" value="ECO:0000314"/>
    <property type="project" value="BHF-UCL"/>
</dbReference>
<dbReference type="GO" id="GO:0098978">
    <property type="term" value="C:glutamatergic synapse"/>
    <property type="evidence" value="ECO:0007669"/>
    <property type="project" value="Ensembl"/>
</dbReference>
<dbReference type="GO" id="GO:0097457">
    <property type="term" value="C:hippocampal mossy fiber"/>
    <property type="evidence" value="ECO:0007669"/>
    <property type="project" value="Ensembl"/>
</dbReference>
<dbReference type="GO" id="GO:0098686">
    <property type="term" value="C:hippocampal mossy fiber to CA3 synapse"/>
    <property type="evidence" value="ECO:0007669"/>
    <property type="project" value="Ensembl"/>
</dbReference>
<dbReference type="GO" id="GO:0005770">
    <property type="term" value="C:late endosome"/>
    <property type="evidence" value="ECO:0000314"/>
    <property type="project" value="BHF-UCL"/>
</dbReference>
<dbReference type="GO" id="GO:0031902">
    <property type="term" value="C:late endosome membrane"/>
    <property type="evidence" value="ECO:0007669"/>
    <property type="project" value="UniProtKB-SubCell"/>
</dbReference>
<dbReference type="GO" id="GO:0005765">
    <property type="term" value="C:lysosomal membrane"/>
    <property type="evidence" value="ECO:0007669"/>
    <property type="project" value="UniProtKB-SubCell"/>
</dbReference>
<dbReference type="GO" id="GO:1990742">
    <property type="term" value="C:microvesicle"/>
    <property type="evidence" value="ECO:0007669"/>
    <property type="project" value="Ensembl"/>
</dbReference>
<dbReference type="GO" id="GO:0043005">
    <property type="term" value="C:neuron projection"/>
    <property type="evidence" value="ECO:0000250"/>
    <property type="project" value="UniProtKB"/>
</dbReference>
<dbReference type="GO" id="GO:0005886">
    <property type="term" value="C:plasma membrane"/>
    <property type="evidence" value="ECO:0000318"/>
    <property type="project" value="GO_Central"/>
</dbReference>
<dbReference type="GO" id="GO:0008021">
    <property type="term" value="C:synaptic vesicle"/>
    <property type="evidence" value="ECO:0000314"/>
    <property type="project" value="UniProtKB"/>
</dbReference>
<dbReference type="GO" id="GO:0030672">
    <property type="term" value="C:synaptic vesicle membrane"/>
    <property type="evidence" value="ECO:0007669"/>
    <property type="project" value="UniProtKB-SubCell"/>
</dbReference>
<dbReference type="GO" id="GO:0015297">
    <property type="term" value="F:antiporter activity"/>
    <property type="evidence" value="ECO:0007669"/>
    <property type="project" value="UniProtKB-KW"/>
</dbReference>
<dbReference type="GO" id="GO:0046872">
    <property type="term" value="F:metal ion binding"/>
    <property type="evidence" value="ECO:0007669"/>
    <property type="project" value="UniProtKB-KW"/>
</dbReference>
<dbReference type="GO" id="GO:0005385">
    <property type="term" value="F:zinc ion transmembrane transporter activity"/>
    <property type="evidence" value="ECO:0000314"/>
    <property type="project" value="UniProtKB"/>
</dbReference>
<dbReference type="GO" id="GO:0051050">
    <property type="term" value="P:positive regulation of transport"/>
    <property type="evidence" value="ECO:0007669"/>
    <property type="project" value="Ensembl"/>
</dbReference>
<dbReference type="GO" id="GO:0010043">
    <property type="term" value="P:response to zinc ion"/>
    <property type="evidence" value="ECO:0000318"/>
    <property type="project" value="GO_Central"/>
</dbReference>
<dbReference type="GO" id="GO:0140916">
    <property type="term" value="P:zinc ion import into lysosome"/>
    <property type="evidence" value="ECO:0000314"/>
    <property type="project" value="BHF-UCL"/>
</dbReference>
<dbReference type="GO" id="GO:0099180">
    <property type="term" value="P:zinc ion import into synaptic vesicle"/>
    <property type="evidence" value="ECO:0007669"/>
    <property type="project" value="Ensembl"/>
</dbReference>
<dbReference type="GO" id="GO:0071577">
    <property type="term" value="P:zinc ion transmembrane transport"/>
    <property type="evidence" value="ECO:0000314"/>
    <property type="project" value="UniProtKB"/>
</dbReference>
<dbReference type="FunFam" id="1.20.1510.10:FF:000002">
    <property type="entry name" value="zinc transporter 3 isoform X1"/>
    <property type="match status" value="1"/>
</dbReference>
<dbReference type="Gene3D" id="1.20.1510.10">
    <property type="entry name" value="Cation efflux protein transmembrane domain"/>
    <property type="match status" value="1"/>
</dbReference>
<dbReference type="InterPro" id="IPR002524">
    <property type="entry name" value="Cation_efflux"/>
</dbReference>
<dbReference type="InterPro" id="IPR036837">
    <property type="entry name" value="Cation_efflux_CTD_sf"/>
</dbReference>
<dbReference type="InterPro" id="IPR027469">
    <property type="entry name" value="Cation_efflux_TMD_sf"/>
</dbReference>
<dbReference type="InterPro" id="IPR050681">
    <property type="entry name" value="CDF/SLC30A"/>
</dbReference>
<dbReference type="NCBIfam" id="TIGR01297">
    <property type="entry name" value="CDF"/>
    <property type="match status" value="1"/>
</dbReference>
<dbReference type="PANTHER" id="PTHR11562">
    <property type="entry name" value="CATION EFFLUX PROTEIN/ ZINC TRANSPORTER"/>
    <property type="match status" value="1"/>
</dbReference>
<dbReference type="PANTHER" id="PTHR11562:SF30">
    <property type="entry name" value="PROTON-COUPLED ZINC ANTIPORTER SLC30A3-RELATED"/>
    <property type="match status" value="1"/>
</dbReference>
<dbReference type="Pfam" id="PF01545">
    <property type="entry name" value="Cation_efflux"/>
    <property type="match status" value="1"/>
</dbReference>
<dbReference type="SUPFAM" id="SSF160240">
    <property type="entry name" value="Cation efflux protein cytoplasmic domain-like"/>
    <property type="match status" value="1"/>
</dbReference>
<dbReference type="SUPFAM" id="SSF161111">
    <property type="entry name" value="Cation efflux protein transmembrane domain-like"/>
    <property type="match status" value="1"/>
</dbReference>
<evidence type="ECO:0000250" key="1">
    <source>
        <dbReference type="UniProtKB" id="P97441"/>
    </source>
</evidence>
<evidence type="ECO:0000250" key="2">
    <source>
        <dbReference type="UniProtKB" id="Q8IWU4"/>
    </source>
</evidence>
<evidence type="ECO:0000255" key="3"/>
<evidence type="ECO:0000256" key="4">
    <source>
        <dbReference type="SAM" id="MobiDB-lite"/>
    </source>
</evidence>
<evidence type="ECO:0000269" key="5">
    <source>
    </source>
</evidence>
<evidence type="ECO:0000269" key="6">
    <source>
    </source>
</evidence>
<evidence type="ECO:0000269" key="7">
    <source>
    </source>
</evidence>
<evidence type="ECO:0000269" key="8">
    <source>
    </source>
</evidence>
<evidence type="ECO:0000303" key="9">
    <source>
    </source>
</evidence>
<evidence type="ECO:0000305" key="10"/>
<evidence type="ECO:0000305" key="11">
    <source>
    </source>
</evidence>
<evidence type="ECO:0000305" key="12">
    <source>
    </source>
</evidence>
<evidence type="ECO:0000305" key="13">
    <source>
    </source>
</evidence>
<evidence type="ECO:0000312" key="14">
    <source>
        <dbReference type="HGNC" id="HGNC:11014"/>
    </source>
</evidence>